<evidence type="ECO:0000255" key="1">
    <source>
        <dbReference type="HAMAP-Rule" id="MF_04064"/>
    </source>
</evidence>
<evidence type="ECO:0000256" key="2">
    <source>
        <dbReference type="SAM" id="MobiDB-lite"/>
    </source>
</evidence>
<evidence type="ECO:0000269" key="3">
    <source>
    </source>
</evidence>
<evidence type="ECO:0000269" key="4">
    <source>
    </source>
</evidence>
<evidence type="ECO:0000269" key="5">
    <source>
    </source>
</evidence>
<evidence type="ECO:0007829" key="6">
    <source>
        <dbReference type="PDB" id="2HN8"/>
    </source>
</evidence>
<sequence>MGQEQDTPWILSTGHISTQKRQDGQQTPKLEHRNSTRLMGHCQKTMNQVVMPKQIVYWKQWLSLRNPILVFLKTRVLKRWRLFSKHE</sequence>
<proteinExistence type="evidence at protein level"/>
<accession>P0C0U1</accession>
<accession>A4GXH2</accession>
<accession>Q20N29</accession>
<dbReference type="EMBL" id="J02151">
    <property type="status" value="NOT_ANNOTATED_CDS"/>
    <property type="molecule type" value="Genomic_RNA"/>
</dbReference>
<dbReference type="EMBL" id="EF467819">
    <property type="protein sequence ID" value="ABO21707.1"/>
    <property type="molecule type" value="Genomic_RNA"/>
</dbReference>
<dbReference type="EMBL" id="CY009450">
    <property type="protein sequence ID" value="ABD77684.1"/>
    <property type="molecule type" value="Genomic_RNA"/>
</dbReference>
<dbReference type="PDB" id="2HN8">
    <property type="method" value="NMR"/>
    <property type="chains" value="A=50-87"/>
</dbReference>
<dbReference type="PDB" id="3BUY">
    <property type="method" value="X-ray"/>
    <property type="resolution" value="2.60 A"/>
    <property type="chains" value="C=62-70"/>
</dbReference>
<dbReference type="PDBsum" id="2HN8"/>
<dbReference type="PDBsum" id="3BUY"/>
<dbReference type="BMRB" id="P0C0U1"/>
<dbReference type="SMR" id="P0C0U1"/>
<dbReference type="IntAct" id="P0C0U1">
    <property type="interactions" value="17"/>
</dbReference>
<dbReference type="KEGG" id="vg:3802042"/>
<dbReference type="OrthoDB" id="22875at10239"/>
<dbReference type="Reactome" id="R-HSA-168277">
    <property type="pathway name" value="Influenza Virus Induced Apoptosis"/>
</dbReference>
<dbReference type="Reactome" id="R-HSA-192823">
    <property type="pathway name" value="Viral mRNA Translation"/>
</dbReference>
<dbReference type="EvolutionaryTrace" id="P0C0U1"/>
<dbReference type="Proteomes" id="UP000009255">
    <property type="component" value="Genome"/>
</dbReference>
<dbReference type="Proteomes" id="UP000170967">
    <property type="component" value="Genome"/>
</dbReference>
<dbReference type="GO" id="GO:0044164">
    <property type="term" value="C:host cell cytosol"/>
    <property type="evidence" value="ECO:0007669"/>
    <property type="project" value="UniProtKB-SubCell"/>
</dbReference>
<dbReference type="GO" id="GO:0044192">
    <property type="term" value="C:host cell mitochondrial inner membrane"/>
    <property type="evidence" value="ECO:0007669"/>
    <property type="project" value="UniProtKB-SubCell"/>
</dbReference>
<dbReference type="GO" id="GO:0042025">
    <property type="term" value="C:host cell nucleus"/>
    <property type="evidence" value="ECO:0007669"/>
    <property type="project" value="UniProtKB-SubCell"/>
</dbReference>
<dbReference type="GO" id="GO:0016020">
    <property type="term" value="C:membrane"/>
    <property type="evidence" value="ECO:0007669"/>
    <property type="project" value="UniProtKB-UniRule"/>
</dbReference>
<dbReference type="GO" id="GO:0052150">
    <property type="term" value="P:symbiont-mediated perturbation of host apoptosis"/>
    <property type="evidence" value="ECO:0007669"/>
    <property type="project" value="UniProtKB-KW"/>
</dbReference>
<dbReference type="GO" id="GO:0039545">
    <property type="term" value="P:symbiont-mediated suppression of host cytoplasmic pattern recognition receptor signaling pathway via inhibition of MAVS activity"/>
    <property type="evidence" value="ECO:0000314"/>
    <property type="project" value="UniProtKB"/>
</dbReference>
<dbReference type="HAMAP" id="MF_04064">
    <property type="entry name" value="INFV_PB1F2"/>
    <property type="match status" value="1"/>
</dbReference>
<dbReference type="InterPro" id="IPR021045">
    <property type="entry name" value="Flu_proapoptotic_PB1-F2"/>
</dbReference>
<dbReference type="Pfam" id="PF11986">
    <property type="entry name" value="PB1-F2"/>
    <property type="match status" value="1"/>
</dbReference>
<organism>
    <name type="scientific">Influenza A virus (strain A/Puerto Rico/8/1934 H1N1)</name>
    <dbReference type="NCBI Taxonomy" id="211044"/>
    <lineage>
        <taxon>Viruses</taxon>
        <taxon>Riboviria</taxon>
        <taxon>Orthornavirae</taxon>
        <taxon>Negarnaviricota</taxon>
        <taxon>Polyploviricotina</taxon>
        <taxon>Insthoviricetes</taxon>
        <taxon>Articulavirales</taxon>
        <taxon>Orthomyxoviridae</taxon>
        <taxon>Alphainfluenzavirus</taxon>
        <taxon>Alphainfluenzavirus influenzae</taxon>
        <taxon>Influenza A virus</taxon>
    </lineage>
</organism>
<gene>
    <name evidence="1" type="primary">PB1</name>
</gene>
<reference key="1">
    <citation type="journal article" date="1982" name="Nucleic Acids Res.">
        <title>Nucleotide sequence of human influenza A/PR/8/34 segment 2.</title>
        <authorList>
            <person name="Winter G."/>
            <person name="Fields S."/>
        </authorList>
    </citation>
    <scope>NUCLEOTIDE SEQUENCE [GENOMIC RNA]</scope>
</reference>
<reference key="2">
    <citation type="journal article" date="2004" name="Virus Res.">
        <title>Efficient generation and growth of influenza virus A/PR/8/34 from eight cDNA fragments.</title>
        <authorList>
            <person name="de Wit E."/>
            <person name="Spronken M.I.J."/>
            <person name="Bestebroer T.M."/>
            <person name="Rimmelzwaan G.F."/>
            <person name="Osterhaus A.D.M.E."/>
            <person name="Fouchier R.A.M."/>
        </authorList>
    </citation>
    <scope>NUCLEOTIDE SEQUENCE [GENOMIC RNA]</scope>
    <scope>REVERSE GENETICS</scope>
</reference>
<reference key="3">
    <citation type="submission" date="2006-03" db="EMBL/GenBank/DDBJ databases">
        <title>The NIAID influenza genome sequencing project.</title>
        <authorList>
            <person name="Ghedin E."/>
            <person name="Spiro D."/>
            <person name="Miller N."/>
            <person name="Zaborsky J."/>
            <person name="Feldblyum T."/>
            <person name="Subbu V."/>
            <person name="Shumway M."/>
            <person name="Sparenborg J."/>
            <person name="Groveman L."/>
            <person name="Halpin R."/>
            <person name="Sitz J."/>
            <person name="Koo H."/>
            <person name="Salzberg S.L."/>
            <person name="Webster R.G."/>
            <person name="Hoffmann E."/>
            <person name="Krauss S."/>
            <person name="Naeve C."/>
            <person name="Bao Y."/>
            <person name="Bolotov P."/>
            <person name="Dernovoy D."/>
            <person name="Kiryutin B."/>
            <person name="Lipman D.J."/>
            <person name="Tatusova T."/>
        </authorList>
    </citation>
    <scope>NUCLEOTIDE SEQUENCE [GENOMIC RNA]</scope>
</reference>
<reference key="4">
    <citation type="journal article" date="2001" name="Nat. Med.">
        <title>A novel influenza A virus mitochondrial protein that induces cell death.</title>
        <authorList>
            <person name="Chen W."/>
            <person name="Calvo P.A."/>
            <person name="Malide D."/>
            <person name="Gibbs J."/>
            <person name="Schubert U."/>
            <person name="Bacik I."/>
            <person name="Basta S."/>
            <person name="O'Neill R."/>
            <person name="Schickli J."/>
            <person name="Palese P."/>
            <person name="Henklein P."/>
            <person name="Bennink J.R."/>
            <person name="Yewdell J.W."/>
        </authorList>
    </citation>
    <scope>CHARACTERIZATION</scope>
</reference>
<reference key="5">
    <citation type="journal article" date="2003" name="J. Virol.">
        <title>The influenza A virus PB1-F2 protein targets the inner mitochondrial membrane via a predicted basic amphipathic helix that disrupts mitochondrial function.</title>
        <authorList>
            <person name="Gibbs J.S."/>
            <person name="Malide D."/>
            <person name="Hornung F."/>
            <person name="Bennink J.R."/>
            <person name="Yewdell J.W."/>
        </authorList>
    </citation>
    <scope>SUBCELLULAR LOCATION</scope>
</reference>
<reference key="6">
    <citation type="journal article" date="2005" name="PLoS Pathog.">
        <title>Influenza virus PB1-F2 protein induces cell death through mitochondrial ANT3 and VDAC1.</title>
        <authorList>
            <person name="Zamarin D."/>
            <person name="Garcia-Sastre A."/>
            <person name="Xiao X."/>
            <person name="Wang R."/>
            <person name="Palese P."/>
        </authorList>
    </citation>
    <scope>INTERACTION WITH HUMAN SLC25A6/ANT3 AND VDAC1</scope>
</reference>
<reference key="7">
    <citation type="journal article" date="2007" name="J. Biol. Chem.">
        <title>Structural characterization and oligomerization of PB1-F2, a proapoptotic Influenza A Virus protein.</title>
        <authorList>
            <person name="Bruns K."/>
            <person name="Studtrucker N."/>
            <person name="Sharma A."/>
            <person name="Fossen T."/>
            <person name="Mitzner D."/>
            <person name="Eissmann A."/>
            <person name="Tessmer U."/>
            <person name="Roder R."/>
            <person name="Henklein P."/>
            <person name="Wray V."/>
            <person name="Schubert U."/>
        </authorList>
    </citation>
    <scope>STRUCTURE BY NMR OF 50-87</scope>
</reference>
<reference key="8">
    <citation type="journal article" date="2011" name="PLoS Pathog.">
        <title>The influenza virus protein PB1-F2 inhibits the induction of type I interferon at the level of the MAVS adaptor protein.</title>
        <authorList>
            <person name="Varga Z.T."/>
            <person name="Ramos I."/>
            <person name="Hai R."/>
            <person name="Schmolke M."/>
            <person name="Garcia-Sastre A."/>
            <person name="Fernandez-Sesma A."/>
            <person name="Palese P."/>
        </authorList>
    </citation>
    <scope>FUNCTION</scope>
</reference>
<comment type="function">
    <text evidence="1 5">Plays an important role in promoting lung pathology in both primary viral infection and secondary bacterial infection. Promotes alteration of mitochondrial morphology, dissipation of mitochondrial membrane potential, and cell death. Alternatively, inhibits the production of interferon in the infected cell at the level of host mitochondrial antiviral signaling MAVS. Its level of expression differs greatly depending on which cell type is infected, in a manner that is independent of the levels of expression of other viral proteins. Monocytic cells are more affected than epithelial cells. Seems to disable virus-infected monocytes or other host innate immune cells. During early stage of infection, predisposes the mitochondria to permeability transition through interaction with host SLC25A6/ANT3 and VDAC1. These proteins participate in the formation of the permeability transition pore complex (PTPC) responsible of the release of mitochondrial products that triggers apoptosis.</text>
</comment>
<comment type="subunit">
    <text evidence="1 4">Oligomer. Interacts with human SLC25A6/ANT3 and VDAC1. Interacts with host MAVS.</text>
</comment>
<comment type="interaction">
    <interactant intactId="EBI-12579807">
        <id>P0C0U1</id>
    </interactant>
    <interactant intactId="EBI-356254">
        <id>P12236</id>
        <label>SLC25A6</label>
    </interactant>
    <organismsDiffer>true</organismsDiffer>
    <experiments>5</experiments>
</comment>
<comment type="interaction">
    <interactant intactId="EBI-12579807">
        <id>P0C0U1</id>
    </interactant>
    <interactant intactId="EBI-354158">
        <id>P21796</id>
        <label>VDAC1</label>
    </interactant>
    <organismsDiffer>true</organismsDiffer>
    <experiments>4</experiments>
</comment>
<comment type="subcellular location">
    <subcellularLocation>
        <location evidence="1 3">Host mitochondrion inner membrane</location>
    </subcellularLocation>
    <subcellularLocation>
        <location evidence="1 3">Host nucleus</location>
    </subcellularLocation>
    <subcellularLocation>
        <location evidence="1 3">Host cytoplasm</location>
        <location evidence="1 3">Host cytosol</location>
    </subcellularLocation>
    <text evidence="1">Inner mitochondrial membrane in most cells types. Otherwise is detected in the nucleus and cytosol.</text>
</comment>
<comment type="miscellaneous">
    <text>Is not encoded in all strains, and seems to be dispensable for replication.</text>
</comment>
<comment type="similarity">
    <text evidence="1">Belongs to the influenza viruses PB1-F2 family.</text>
</comment>
<protein>
    <recommendedName>
        <fullName evidence="1">Protein PB1-F2</fullName>
    </recommendedName>
</protein>
<name>PB1F2_I34A1</name>
<feature type="chain" id="PRO_0000078743" description="Protein PB1-F2">
    <location>
        <begin position="1"/>
        <end position="87"/>
    </location>
</feature>
<feature type="region of interest" description="Disordered" evidence="2">
    <location>
        <begin position="1"/>
        <end position="38"/>
    </location>
</feature>
<feature type="region of interest" description="Mitochondrial targeting sequence" evidence="1">
    <location>
        <begin position="65"/>
        <end position="87"/>
    </location>
</feature>
<feature type="compositionally biased region" description="Polar residues" evidence="2">
    <location>
        <begin position="14"/>
        <end position="28"/>
    </location>
</feature>
<feature type="site" description="Low pathogenicity" evidence="1">
    <location>
        <position position="66"/>
    </location>
</feature>
<feature type="sequence variant">
    <original>Q</original>
    <variation>E</variation>
    <location>
        <position position="22"/>
    </location>
</feature>
<feature type="sequence variant">
    <original>KQ</original>
    <variation>RR</variation>
    <location>
        <begin position="59"/>
        <end position="60"/>
    </location>
</feature>
<feature type="helix" evidence="6">
    <location>
        <begin position="52"/>
        <end position="62"/>
    </location>
</feature>
<feature type="helix" evidence="6">
    <location>
        <begin position="65"/>
        <end position="86"/>
    </location>
</feature>
<keyword id="KW-0002">3D-structure</keyword>
<keyword id="KW-0053">Apoptosis</keyword>
<keyword id="KW-1035">Host cytoplasm</keyword>
<keyword id="KW-1043">Host membrane</keyword>
<keyword id="KW-1045">Host mitochondrion</keyword>
<keyword id="KW-1046">Host mitochondrion inner membrane</keyword>
<keyword id="KW-1048">Host nucleus</keyword>
<keyword id="KW-0945">Host-virus interaction</keyword>
<keyword id="KW-1090">Inhibition of host innate immune response by virus</keyword>
<keyword id="KW-1097">Inhibition of host MAVS by virus</keyword>
<keyword id="KW-1113">Inhibition of host RLR pathway by virus</keyword>
<keyword id="KW-0472">Membrane</keyword>
<keyword id="KW-1119">Modulation of host cell apoptosis by virus</keyword>
<keyword id="KW-1185">Reference proteome</keyword>
<keyword id="KW-0899">Viral immunoevasion</keyword>
<organismHost>
    <name type="scientific">Aves</name>
    <dbReference type="NCBI Taxonomy" id="8782"/>
</organismHost>
<organismHost>
    <name type="scientific">Homo sapiens</name>
    <name type="common">Human</name>
    <dbReference type="NCBI Taxonomy" id="9606"/>
</organismHost>
<organismHost>
    <name type="scientific">Sus scrofa</name>
    <name type="common">Pig</name>
    <dbReference type="NCBI Taxonomy" id="9823"/>
</organismHost>